<comment type="function">
    <text evidence="1">Catalyzes the synthesis of the hydroxymethylpyrimidine phosphate (HMP-P) moiety of thiamine from aminoimidazole ribotide (AIR) in a radical S-adenosyl-L-methionine (SAM)-dependent reaction.</text>
</comment>
<comment type="catalytic activity">
    <reaction evidence="1">
        <text>5-amino-1-(5-phospho-beta-D-ribosyl)imidazole + S-adenosyl-L-methionine = 4-amino-2-methyl-5-(phosphooxymethyl)pyrimidine + CO + 5'-deoxyadenosine + formate + L-methionine + 3 H(+)</text>
        <dbReference type="Rhea" id="RHEA:24840"/>
        <dbReference type="ChEBI" id="CHEBI:15378"/>
        <dbReference type="ChEBI" id="CHEBI:15740"/>
        <dbReference type="ChEBI" id="CHEBI:17245"/>
        <dbReference type="ChEBI" id="CHEBI:17319"/>
        <dbReference type="ChEBI" id="CHEBI:57844"/>
        <dbReference type="ChEBI" id="CHEBI:58354"/>
        <dbReference type="ChEBI" id="CHEBI:59789"/>
        <dbReference type="ChEBI" id="CHEBI:137981"/>
        <dbReference type="EC" id="4.1.99.17"/>
    </reaction>
</comment>
<comment type="cofactor">
    <cofactor evidence="1">
        <name>[4Fe-4S] cluster</name>
        <dbReference type="ChEBI" id="CHEBI:49883"/>
    </cofactor>
    <text evidence="1">Binds 1 [4Fe-4S] cluster per subunit. The cluster is coordinated with 3 cysteines and an exchangeable S-adenosyl-L-methionine.</text>
</comment>
<comment type="pathway">
    <text evidence="1">Cofactor biosynthesis; thiamine diphosphate biosynthesis.</text>
</comment>
<comment type="subunit">
    <text evidence="1">Homodimer.</text>
</comment>
<comment type="similarity">
    <text evidence="1">Belongs to the ThiC family.</text>
</comment>
<dbReference type="EC" id="4.1.99.17" evidence="1"/>
<dbReference type="EMBL" id="AP009240">
    <property type="protein sequence ID" value="BAG79806.1"/>
    <property type="molecule type" value="Genomic_DNA"/>
</dbReference>
<dbReference type="RefSeq" id="WP_001276926.1">
    <property type="nucleotide sequence ID" value="NC_011415.1"/>
</dbReference>
<dbReference type="SMR" id="B6I5K5"/>
<dbReference type="GeneID" id="75205512"/>
<dbReference type="KEGG" id="ecy:ECSE_4282"/>
<dbReference type="HOGENOM" id="CLU_013181_2_1_6"/>
<dbReference type="UniPathway" id="UPA00060"/>
<dbReference type="Proteomes" id="UP000008199">
    <property type="component" value="Chromosome"/>
</dbReference>
<dbReference type="GO" id="GO:0005829">
    <property type="term" value="C:cytosol"/>
    <property type="evidence" value="ECO:0007669"/>
    <property type="project" value="TreeGrafter"/>
</dbReference>
<dbReference type="GO" id="GO:0051539">
    <property type="term" value="F:4 iron, 4 sulfur cluster binding"/>
    <property type="evidence" value="ECO:0007669"/>
    <property type="project" value="UniProtKB-KW"/>
</dbReference>
<dbReference type="GO" id="GO:0016830">
    <property type="term" value="F:carbon-carbon lyase activity"/>
    <property type="evidence" value="ECO:0007669"/>
    <property type="project" value="InterPro"/>
</dbReference>
<dbReference type="GO" id="GO:0008270">
    <property type="term" value="F:zinc ion binding"/>
    <property type="evidence" value="ECO:0007669"/>
    <property type="project" value="UniProtKB-UniRule"/>
</dbReference>
<dbReference type="GO" id="GO:0009228">
    <property type="term" value="P:thiamine biosynthetic process"/>
    <property type="evidence" value="ECO:0007669"/>
    <property type="project" value="UniProtKB-KW"/>
</dbReference>
<dbReference type="GO" id="GO:0009229">
    <property type="term" value="P:thiamine diphosphate biosynthetic process"/>
    <property type="evidence" value="ECO:0007669"/>
    <property type="project" value="UniProtKB-UniRule"/>
</dbReference>
<dbReference type="FunFam" id="3.20.20.540:FF:000001">
    <property type="entry name" value="Phosphomethylpyrimidine synthase"/>
    <property type="match status" value="1"/>
</dbReference>
<dbReference type="Gene3D" id="6.10.250.620">
    <property type="match status" value="1"/>
</dbReference>
<dbReference type="Gene3D" id="3.20.20.540">
    <property type="entry name" value="Radical SAM ThiC family, central domain"/>
    <property type="match status" value="1"/>
</dbReference>
<dbReference type="HAMAP" id="MF_00089">
    <property type="entry name" value="ThiC"/>
    <property type="match status" value="1"/>
</dbReference>
<dbReference type="InterPro" id="IPR037509">
    <property type="entry name" value="ThiC"/>
</dbReference>
<dbReference type="InterPro" id="IPR025747">
    <property type="entry name" value="ThiC-associated_dom"/>
</dbReference>
<dbReference type="InterPro" id="IPR038521">
    <property type="entry name" value="ThiC/Bza_core_dom"/>
</dbReference>
<dbReference type="InterPro" id="IPR002817">
    <property type="entry name" value="ThiC/BzaA/B"/>
</dbReference>
<dbReference type="NCBIfam" id="NF006763">
    <property type="entry name" value="PRK09284.1"/>
    <property type="match status" value="1"/>
</dbReference>
<dbReference type="NCBIfam" id="NF009895">
    <property type="entry name" value="PRK13352.1"/>
    <property type="match status" value="1"/>
</dbReference>
<dbReference type="NCBIfam" id="TIGR00190">
    <property type="entry name" value="thiC"/>
    <property type="match status" value="1"/>
</dbReference>
<dbReference type="PANTHER" id="PTHR30557:SF1">
    <property type="entry name" value="PHOSPHOMETHYLPYRIMIDINE SYNTHASE, CHLOROPLASTIC"/>
    <property type="match status" value="1"/>
</dbReference>
<dbReference type="PANTHER" id="PTHR30557">
    <property type="entry name" value="THIAMINE BIOSYNTHESIS PROTEIN THIC"/>
    <property type="match status" value="1"/>
</dbReference>
<dbReference type="Pfam" id="PF13667">
    <property type="entry name" value="ThiC-associated"/>
    <property type="match status" value="1"/>
</dbReference>
<dbReference type="Pfam" id="PF01964">
    <property type="entry name" value="ThiC_Rad_SAM"/>
    <property type="match status" value="1"/>
</dbReference>
<dbReference type="SFLD" id="SFLDF00407">
    <property type="entry name" value="phosphomethylpyrimidine_syntha"/>
    <property type="match status" value="1"/>
</dbReference>
<dbReference type="SFLD" id="SFLDG01114">
    <property type="entry name" value="phosphomethylpyrimidine_syntha"/>
    <property type="match status" value="1"/>
</dbReference>
<dbReference type="SFLD" id="SFLDS00113">
    <property type="entry name" value="Radical_SAM_Phosphomethylpyrim"/>
    <property type="match status" value="1"/>
</dbReference>
<name>THIC_ECOSE</name>
<feature type="chain" id="PRO_1000093209" description="Phosphomethylpyrimidine synthase">
    <location>
        <begin position="1"/>
        <end position="631"/>
    </location>
</feature>
<feature type="binding site" evidence="1">
    <location>
        <position position="239"/>
    </location>
    <ligand>
        <name>substrate</name>
    </ligand>
</feature>
<feature type="binding site" evidence="1">
    <location>
        <position position="268"/>
    </location>
    <ligand>
        <name>substrate</name>
    </ligand>
</feature>
<feature type="binding site" evidence="1">
    <location>
        <position position="297"/>
    </location>
    <ligand>
        <name>substrate</name>
    </ligand>
</feature>
<feature type="binding site" evidence="1">
    <location>
        <position position="333"/>
    </location>
    <ligand>
        <name>substrate</name>
    </ligand>
</feature>
<feature type="binding site" evidence="1">
    <location>
        <begin position="353"/>
        <end position="355"/>
    </location>
    <ligand>
        <name>substrate</name>
    </ligand>
</feature>
<feature type="binding site" evidence="1">
    <location>
        <begin position="394"/>
        <end position="397"/>
    </location>
    <ligand>
        <name>substrate</name>
    </ligand>
</feature>
<feature type="binding site" evidence="1">
    <location>
        <position position="433"/>
    </location>
    <ligand>
        <name>substrate</name>
    </ligand>
</feature>
<feature type="binding site" evidence="1">
    <location>
        <position position="437"/>
    </location>
    <ligand>
        <name>Zn(2+)</name>
        <dbReference type="ChEBI" id="CHEBI:29105"/>
    </ligand>
</feature>
<feature type="binding site" evidence="1">
    <location>
        <position position="460"/>
    </location>
    <ligand>
        <name>substrate</name>
    </ligand>
</feature>
<feature type="binding site" evidence="1">
    <location>
        <position position="501"/>
    </location>
    <ligand>
        <name>Zn(2+)</name>
        <dbReference type="ChEBI" id="CHEBI:29105"/>
    </ligand>
</feature>
<feature type="binding site" evidence="1">
    <location>
        <position position="581"/>
    </location>
    <ligand>
        <name>[4Fe-4S] cluster</name>
        <dbReference type="ChEBI" id="CHEBI:49883"/>
        <note>4Fe-4S-S-AdoMet</note>
    </ligand>
</feature>
<feature type="binding site" evidence="1">
    <location>
        <position position="584"/>
    </location>
    <ligand>
        <name>[4Fe-4S] cluster</name>
        <dbReference type="ChEBI" id="CHEBI:49883"/>
        <note>4Fe-4S-S-AdoMet</note>
    </ligand>
</feature>
<feature type="binding site" evidence="1">
    <location>
        <position position="589"/>
    </location>
    <ligand>
        <name>[4Fe-4S] cluster</name>
        <dbReference type="ChEBI" id="CHEBI:49883"/>
        <note>4Fe-4S-S-AdoMet</note>
    </ligand>
</feature>
<sequence length="631" mass="70850">MSATKLTRREQRARAQHFIDTLEGTAFPNSKRIYITGTHPGVRVPMREIQLSPTLIGGSKEQPQYEENEAIPVYDTSGPYGDPQIAINVQQGLAKLRQPWIDARGDTEELTVRSSDYTKARLADDGLDELRFSGVLTPKRAKAGRRVTQLHYARQGIITPEMEFIAIRENMGRERIRSEVLRHQHPGMSFGAHLPENITAEFVRDEVAAGRAIIPANINHPESEPMIIGRNFLVKVNANIGNSAVTSSIEEEVEKLVWSTRWGADTVMDLSTGRYIHETREWILRNSPVPIGTVPIYQALEKVNGIAEDLTWEAFRDTLLEQAEQGVDYFTIHAGVLLRYVPMTAKRLTGIVSRGGSIMAKWCLSHHQENFLYQHFREICEICAAYDVSLSLGDGLRPGSIQDANDEAQFAELHTLGELTKIAWEYDVQVMIEGPGHVPMQMIRRNMTEELEHCHEAPFYTLGPLTTDIAPGYDHFTSGIGAAMIGWFGCAMLCYVTPKEHLGLPNKEDVKQGLITYKIAAHAADLAKGHPGAQIRDNAMSKARFEFRWEDQFNLALDPFTARAYHDETLPQESGKVAHFCSMCGPKFCSMKISQEVRDYAATQTIEMGMADMSENFRARGGEIYLRKEEA</sequence>
<organism>
    <name type="scientific">Escherichia coli (strain SE11)</name>
    <dbReference type="NCBI Taxonomy" id="409438"/>
    <lineage>
        <taxon>Bacteria</taxon>
        <taxon>Pseudomonadati</taxon>
        <taxon>Pseudomonadota</taxon>
        <taxon>Gammaproteobacteria</taxon>
        <taxon>Enterobacterales</taxon>
        <taxon>Enterobacteriaceae</taxon>
        <taxon>Escherichia</taxon>
    </lineage>
</organism>
<proteinExistence type="inferred from homology"/>
<accession>B6I5K5</accession>
<reference key="1">
    <citation type="journal article" date="2008" name="DNA Res.">
        <title>Complete genome sequence and comparative analysis of the wild-type commensal Escherichia coli strain SE11 isolated from a healthy adult.</title>
        <authorList>
            <person name="Oshima K."/>
            <person name="Toh H."/>
            <person name="Ogura Y."/>
            <person name="Sasamoto H."/>
            <person name="Morita H."/>
            <person name="Park S.-H."/>
            <person name="Ooka T."/>
            <person name="Iyoda S."/>
            <person name="Taylor T.D."/>
            <person name="Hayashi T."/>
            <person name="Itoh K."/>
            <person name="Hattori M."/>
        </authorList>
    </citation>
    <scope>NUCLEOTIDE SEQUENCE [LARGE SCALE GENOMIC DNA]</scope>
    <source>
        <strain>SE11</strain>
    </source>
</reference>
<gene>
    <name evidence="1" type="primary">thiC</name>
    <name type="ordered locus">ECSE_4282</name>
</gene>
<evidence type="ECO:0000255" key="1">
    <source>
        <dbReference type="HAMAP-Rule" id="MF_00089"/>
    </source>
</evidence>
<protein>
    <recommendedName>
        <fullName evidence="1">Phosphomethylpyrimidine synthase</fullName>
        <ecNumber evidence="1">4.1.99.17</ecNumber>
    </recommendedName>
    <alternativeName>
        <fullName evidence="1">Hydroxymethylpyrimidine phosphate synthase</fullName>
        <shortName evidence="1">HMP-P synthase</shortName>
        <shortName evidence="1">HMP-phosphate synthase</shortName>
        <shortName evidence="1">HMPP synthase</shortName>
    </alternativeName>
    <alternativeName>
        <fullName evidence="1">Thiamine biosynthesis protein ThiC</fullName>
    </alternativeName>
</protein>
<keyword id="KW-0004">4Fe-4S</keyword>
<keyword id="KW-0408">Iron</keyword>
<keyword id="KW-0411">Iron-sulfur</keyword>
<keyword id="KW-0456">Lyase</keyword>
<keyword id="KW-0479">Metal-binding</keyword>
<keyword id="KW-0949">S-adenosyl-L-methionine</keyword>
<keyword id="KW-0784">Thiamine biosynthesis</keyword>
<keyword id="KW-0862">Zinc</keyword>